<organism>
    <name type="scientific">Saccharomyces cerevisiae (strain YJM789)</name>
    <name type="common">Baker's yeast</name>
    <dbReference type="NCBI Taxonomy" id="307796"/>
    <lineage>
        <taxon>Eukaryota</taxon>
        <taxon>Fungi</taxon>
        <taxon>Dikarya</taxon>
        <taxon>Ascomycota</taxon>
        <taxon>Saccharomycotina</taxon>
        <taxon>Saccharomycetes</taxon>
        <taxon>Saccharomycetales</taxon>
        <taxon>Saccharomycetaceae</taxon>
        <taxon>Saccharomyces</taxon>
    </lineage>
</organism>
<reference key="1">
    <citation type="journal article" date="2007" name="Proc. Natl. Acad. Sci. U.S.A.">
        <title>Genome sequencing and comparative analysis of Saccharomyces cerevisiae strain YJM789.</title>
        <authorList>
            <person name="Wei W."/>
            <person name="McCusker J.H."/>
            <person name="Hyman R.W."/>
            <person name="Jones T."/>
            <person name="Ning Y."/>
            <person name="Cao Z."/>
            <person name="Gu Z."/>
            <person name="Bruno D."/>
            <person name="Miranda M."/>
            <person name="Nguyen M."/>
            <person name="Wilhelmy J."/>
            <person name="Komp C."/>
            <person name="Tamse R."/>
            <person name="Wang X."/>
            <person name="Jia P."/>
            <person name="Luedi P."/>
            <person name="Oefner P.J."/>
            <person name="David L."/>
            <person name="Dietrich F.S."/>
            <person name="Li Y."/>
            <person name="Davis R.W."/>
            <person name="Steinmetz L.M."/>
        </authorList>
    </citation>
    <scope>NUCLEOTIDE SEQUENCE [LARGE SCALE GENOMIC DNA]</scope>
    <source>
        <strain>YJM789</strain>
    </source>
</reference>
<proteinExistence type="evidence at transcript level"/>
<sequence length="305" mass="32656">MSSNDSNDTDKQHTRLDPTGVDDAYIPPEQPETKHHRFKISKDTLRNHFIAAAGEFCGTFMFLWCAYVICNVANHDVALVAAPDGSHPGQLIMIAIGFGFSVMFSIWCFAGVSGGALNPAMSLSLCLARAVSPTRCVVMWVSQIVAGMAAGGAASAMTPGEVLFANSLGLGCSRTRGLFLEMFGTAILCLTVLMTAVEKRETNFMAALPIGISLFIAHVALTAYTGTGVNPARSLGAAVAARYFPHYHWIYWIGTLLGSILAWSVWQLLQILDYTTYVTAEKAASTKEKAQKKGETSSSSAVAEV</sequence>
<name>AQY1_YEAS7</name>
<comment type="function">
    <text>Water channel required to facilitate the transport of water across membranes. Involved in sporulation, freeze tolerance and osmotolerance. Is non-functional in most laboratory strains.</text>
</comment>
<comment type="subcellular location">
    <subcellularLocation>
        <location>Endoplasmic reticulum membrane</location>
        <topology>Multi-pass membrane protein</topology>
    </subcellularLocation>
    <subcellularLocation>
        <location>Cell membrane</location>
        <topology>Multi-pass membrane protein</topology>
    </subcellularLocation>
</comment>
<comment type="developmental stage">
    <text>Expressed in spores.</text>
</comment>
<comment type="domain">
    <text>Aquaporins contain two tandem repeats each containing three membrane-spanning domains and a pore-forming loop with the signature motif Asn-Pro-Ala (NPA).</text>
</comment>
<comment type="similarity">
    <text evidence="4">Belongs to the MIP/aquaporin (TC 1.A.8) family.</text>
</comment>
<gene>
    <name type="primary">AQY1</name>
    <name type="ORF">SCY_5893</name>
</gene>
<keyword id="KW-1003">Cell membrane</keyword>
<keyword id="KW-0256">Endoplasmic reticulum</keyword>
<keyword id="KW-0472">Membrane</keyword>
<keyword id="KW-0677">Repeat</keyword>
<keyword id="KW-0812">Transmembrane</keyword>
<keyword id="KW-1133">Transmembrane helix</keyword>
<keyword id="KW-0813">Transport</keyword>
<accession>A6ZX66</accession>
<dbReference type="EMBL" id="AAFW02000135">
    <property type="protein sequence ID" value="EDN61308.1"/>
    <property type="molecule type" value="Genomic_DNA"/>
</dbReference>
<dbReference type="SMR" id="A6ZX66"/>
<dbReference type="HOGENOM" id="CLU_020019_1_4_1"/>
<dbReference type="OrthoDB" id="27219at4893"/>
<dbReference type="Proteomes" id="UP000007060">
    <property type="component" value="Unassembled WGS sequence"/>
</dbReference>
<dbReference type="GO" id="GO:0005789">
    <property type="term" value="C:endoplasmic reticulum membrane"/>
    <property type="evidence" value="ECO:0007669"/>
    <property type="project" value="UniProtKB-SubCell"/>
</dbReference>
<dbReference type="GO" id="GO:0005886">
    <property type="term" value="C:plasma membrane"/>
    <property type="evidence" value="ECO:0007669"/>
    <property type="project" value="UniProtKB-SubCell"/>
</dbReference>
<dbReference type="GO" id="GO:0015250">
    <property type="term" value="F:water channel activity"/>
    <property type="evidence" value="ECO:0007669"/>
    <property type="project" value="TreeGrafter"/>
</dbReference>
<dbReference type="FunFam" id="1.20.1080.10:FF:000014">
    <property type="entry name" value="Aquaporin 1"/>
    <property type="match status" value="1"/>
</dbReference>
<dbReference type="Gene3D" id="1.20.1080.10">
    <property type="entry name" value="Glycerol uptake facilitator protein"/>
    <property type="match status" value="1"/>
</dbReference>
<dbReference type="InterPro" id="IPR023271">
    <property type="entry name" value="Aquaporin-like"/>
</dbReference>
<dbReference type="InterPro" id="IPR034294">
    <property type="entry name" value="Aquaporin_transptr"/>
</dbReference>
<dbReference type="InterPro" id="IPR000425">
    <property type="entry name" value="MIP"/>
</dbReference>
<dbReference type="InterPro" id="IPR022357">
    <property type="entry name" value="MIP_CS"/>
</dbReference>
<dbReference type="NCBIfam" id="TIGR00861">
    <property type="entry name" value="MIP"/>
    <property type="match status" value="1"/>
</dbReference>
<dbReference type="PANTHER" id="PTHR19139">
    <property type="entry name" value="AQUAPORIN TRANSPORTER"/>
    <property type="match status" value="1"/>
</dbReference>
<dbReference type="PANTHER" id="PTHR19139:SF199">
    <property type="entry name" value="MIP17260P"/>
    <property type="match status" value="1"/>
</dbReference>
<dbReference type="Pfam" id="PF00230">
    <property type="entry name" value="MIP"/>
    <property type="match status" value="1"/>
</dbReference>
<dbReference type="PRINTS" id="PR00783">
    <property type="entry name" value="MINTRINSICP"/>
</dbReference>
<dbReference type="SUPFAM" id="SSF81338">
    <property type="entry name" value="Aquaporin-like"/>
    <property type="match status" value="1"/>
</dbReference>
<dbReference type="PROSITE" id="PS00221">
    <property type="entry name" value="MIP"/>
    <property type="match status" value="1"/>
</dbReference>
<evidence type="ECO:0000250" key="1"/>
<evidence type="ECO:0000255" key="2"/>
<evidence type="ECO:0000256" key="3">
    <source>
        <dbReference type="SAM" id="MobiDB-lite"/>
    </source>
</evidence>
<evidence type="ECO:0000305" key="4"/>
<feature type="chain" id="PRO_0000391662" description="Aquaporin-1">
    <location>
        <begin position="1"/>
        <end position="305"/>
    </location>
</feature>
<feature type="topological domain" description="Cytoplasmic" evidence="1">
    <location>
        <begin position="1"/>
        <end position="48"/>
    </location>
</feature>
<feature type="transmembrane region" description="Helical; Name=1" evidence="2">
    <location>
        <begin position="49"/>
        <end position="69"/>
    </location>
</feature>
<feature type="topological domain" description="Extracellular" evidence="1">
    <location>
        <begin position="70"/>
        <end position="91"/>
    </location>
</feature>
<feature type="transmembrane region" description="Helical; Name=2" evidence="2">
    <location>
        <begin position="92"/>
        <end position="112"/>
    </location>
</feature>
<feature type="topological domain" description="Cytoplasmic" evidence="1">
    <location>
        <begin position="113"/>
        <end position="136"/>
    </location>
</feature>
<feature type="transmembrane region" description="Helical; Name=3" evidence="2">
    <location>
        <begin position="137"/>
        <end position="157"/>
    </location>
</feature>
<feature type="topological domain" description="Extracellular" evidence="1">
    <location>
        <begin position="158"/>
        <end position="176"/>
    </location>
</feature>
<feature type="transmembrane region" description="Helical; Name=4" evidence="2">
    <location>
        <begin position="177"/>
        <end position="197"/>
    </location>
</feature>
<feature type="topological domain" description="Cytoplasmic" evidence="1">
    <location>
        <begin position="198"/>
        <end position="203"/>
    </location>
</feature>
<feature type="transmembrane region" description="Helical; Name=5" evidence="2">
    <location>
        <begin position="204"/>
        <end position="224"/>
    </location>
</feature>
<feature type="topological domain" description="Extracellular" evidence="1">
    <location>
        <begin position="225"/>
        <end position="248"/>
    </location>
</feature>
<feature type="transmembrane region" description="Helical; Name=6" evidence="2">
    <location>
        <begin position="249"/>
        <end position="269"/>
    </location>
</feature>
<feature type="topological domain" description="Cytoplasmic" evidence="1">
    <location>
        <begin position="270"/>
        <end position="305"/>
    </location>
</feature>
<feature type="region of interest" description="Disordered" evidence="3">
    <location>
        <begin position="1"/>
        <end position="34"/>
    </location>
</feature>
<feature type="region of interest" description="Disordered" evidence="3">
    <location>
        <begin position="286"/>
        <end position="305"/>
    </location>
</feature>
<feature type="short sequence motif" description="NPA 1">
    <location>
        <begin position="118"/>
        <end position="120"/>
    </location>
</feature>
<feature type="short sequence motif" description="NPA 2">
    <location>
        <begin position="230"/>
        <end position="232"/>
    </location>
</feature>
<feature type="compositionally biased region" description="Basic and acidic residues" evidence="3">
    <location>
        <begin position="286"/>
        <end position="295"/>
    </location>
</feature>
<feature type="compositionally biased region" description="Polar residues" evidence="3">
    <location>
        <begin position="296"/>
        <end position="305"/>
    </location>
</feature>
<protein>
    <recommendedName>
        <fullName>Aquaporin-1</fullName>
    </recommendedName>
</protein>